<evidence type="ECO:0000255" key="1">
    <source>
        <dbReference type="HAMAP-Rule" id="MF_01325"/>
    </source>
</evidence>
<evidence type="ECO:0000256" key="2">
    <source>
        <dbReference type="SAM" id="MobiDB-lite"/>
    </source>
</evidence>
<evidence type="ECO:0000305" key="3"/>
<gene>
    <name evidence="1" type="primary">rplC</name>
    <name type="ordered locus">TTE2293</name>
</gene>
<accession>Q8R7V4</accession>
<comment type="function">
    <text evidence="1">One of the primary rRNA binding proteins, it binds directly near the 3'-end of the 23S rRNA, where it nucleates assembly of the 50S subunit.</text>
</comment>
<comment type="subunit">
    <text evidence="1">Part of the 50S ribosomal subunit. Forms a cluster with proteins L14 and L19.</text>
</comment>
<comment type="similarity">
    <text evidence="1">Belongs to the universal ribosomal protein uL3 family.</text>
</comment>
<keyword id="KW-1185">Reference proteome</keyword>
<keyword id="KW-0687">Ribonucleoprotein</keyword>
<keyword id="KW-0689">Ribosomal protein</keyword>
<keyword id="KW-0694">RNA-binding</keyword>
<keyword id="KW-0699">rRNA-binding</keyword>
<organism>
    <name type="scientific">Caldanaerobacter subterraneus subsp. tengcongensis (strain DSM 15242 / JCM 11007 / NBRC 100824 / MB4)</name>
    <name type="common">Thermoanaerobacter tengcongensis</name>
    <dbReference type="NCBI Taxonomy" id="273068"/>
    <lineage>
        <taxon>Bacteria</taxon>
        <taxon>Bacillati</taxon>
        <taxon>Bacillota</taxon>
        <taxon>Clostridia</taxon>
        <taxon>Thermoanaerobacterales</taxon>
        <taxon>Thermoanaerobacteraceae</taxon>
        <taxon>Caldanaerobacter</taxon>
    </lineage>
</organism>
<proteinExistence type="inferred from homology"/>
<feature type="chain" id="PRO_0000077181" description="Large ribosomal subunit protein uL3">
    <location>
        <begin position="1"/>
        <end position="210"/>
    </location>
</feature>
<feature type="region of interest" description="Disordered" evidence="2">
    <location>
        <begin position="131"/>
        <end position="165"/>
    </location>
</feature>
<protein>
    <recommendedName>
        <fullName evidence="1">Large ribosomal subunit protein uL3</fullName>
    </recommendedName>
    <alternativeName>
        <fullName evidence="3">50S ribosomal protein L3</fullName>
    </alternativeName>
</protein>
<dbReference type="EMBL" id="AE008691">
    <property type="protein sequence ID" value="AAM25435.1"/>
    <property type="molecule type" value="Genomic_DNA"/>
</dbReference>
<dbReference type="RefSeq" id="WP_011026338.1">
    <property type="nucleotide sequence ID" value="NZ_JANUCV010000001.1"/>
</dbReference>
<dbReference type="SMR" id="Q8R7V4"/>
<dbReference type="STRING" id="273068.TTE2293"/>
<dbReference type="KEGG" id="tte:TTE2293"/>
<dbReference type="eggNOG" id="COG0087">
    <property type="taxonomic scope" value="Bacteria"/>
</dbReference>
<dbReference type="HOGENOM" id="CLU_044142_4_1_9"/>
<dbReference type="OrthoDB" id="9806135at2"/>
<dbReference type="Proteomes" id="UP000000555">
    <property type="component" value="Chromosome"/>
</dbReference>
<dbReference type="GO" id="GO:0022625">
    <property type="term" value="C:cytosolic large ribosomal subunit"/>
    <property type="evidence" value="ECO:0007669"/>
    <property type="project" value="TreeGrafter"/>
</dbReference>
<dbReference type="GO" id="GO:0019843">
    <property type="term" value="F:rRNA binding"/>
    <property type="evidence" value="ECO:0007669"/>
    <property type="project" value="UniProtKB-UniRule"/>
</dbReference>
<dbReference type="GO" id="GO:0003735">
    <property type="term" value="F:structural constituent of ribosome"/>
    <property type="evidence" value="ECO:0007669"/>
    <property type="project" value="InterPro"/>
</dbReference>
<dbReference type="GO" id="GO:0006412">
    <property type="term" value="P:translation"/>
    <property type="evidence" value="ECO:0007669"/>
    <property type="project" value="UniProtKB-UniRule"/>
</dbReference>
<dbReference type="FunFam" id="2.40.30.10:FF:000004">
    <property type="entry name" value="50S ribosomal protein L3"/>
    <property type="match status" value="1"/>
</dbReference>
<dbReference type="FunFam" id="3.30.160.810:FF:000001">
    <property type="entry name" value="50S ribosomal protein L3"/>
    <property type="match status" value="1"/>
</dbReference>
<dbReference type="Gene3D" id="3.30.160.810">
    <property type="match status" value="1"/>
</dbReference>
<dbReference type="Gene3D" id="2.40.30.10">
    <property type="entry name" value="Translation factors"/>
    <property type="match status" value="1"/>
</dbReference>
<dbReference type="HAMAP" id="MF_01325_B">
    <property type="entry name" value="Ribosomal_uL3_B"/>
    <property type="match status" value="1"/>
</dbReference>
<dbReference type="InterPro" id="IPR000597">
    <property type="entry name" value="Ribosomal_uL3"/>
</dbReference>
<dbReference type="InterPro" id="IPR019927">
    <property type="entry name" value="Ribosomal_uL3_bac/org-type"/>
</dbReference>
<dbReference type="InterPro" id="IPR019926">
    <property type="entry name" value="Ribosomal_uL3_CS"/>
</dbReference>
<dbReference type="InterPro" id="IPR009000">
    <property type="entry name" value="Transl_B-barrel_sf"/>
</dbReference>
<dbReference type="NCBIfam" id="TIGR03625">
    <property type="entry name" value="L3_bact"/>
    <property type="match status" value="1"/>
</dbReference>
<dbReference type="PANTHER" id="PTHR11229">
    <property type="entry name" value="50S RIBOSOMAL PROTEIN L3"/>
    <property type="match status" value="1"/>
</dbReference>
<dbReference type="PANTHER" id="PTHR11229:SF16">
    <property type="entry name" value="LARGE RIBOSOMAL SUBUNIT PROTEIN UL3C"/>
    <property type="match status" value="1"/>
</dbReference>
<dbReference type="Pfam" id="PF00297">
    <property type="entry name" value="Ribosomal_L3"/>
    <property type="match status" value="1"/>
</dbReference>
<dbReference type="SUPFAM" id="SSF50447">
    <property type="entry name" value="Translation proteins"/>
    <property type="match status" value="1"/>
</dbReference>
<dbReference type="PROSITE" id="PS00474">
    <property type="entry name" value="RIBOSOMAL_L3"/>
    <property type="match status" value="1"/>
</dbReference>
<sequence length="210" mass="22876">MKKGILGKKHGMTQIFDEKGEVIPVTVIEAGPCVVVQKKTVEKDGYNAIQVGFGDVSEKKLNKPLLGHFKKAGVSPKRYLREFRLDDISGYEVGTEIKVDIFKPGDRVDVTGISKGKGFAGVIKRYGARRGPMSHGSKYHRRVGSMGATTDPGRTFKGKKMPGRMGSDRVTIQNLEVVKVDPELNLLVVKGSVPGPKGSLLIIRDSVKSK</sequence>
<name>RL3_CALS4</name>
<reference key="1">
    <citation type="journal article" date="2002" name="Genome Res.">
        <title>A complete sequence of the T. tengcongensis genome.</title>
        <authorList>
            <person name="Bao Q."/>
            <person name="Tian Y."/>
            <person name="Li W."/>
            <person name="Xu Z."/>
            <person name="Xuan Z."/>
            <person name="Hu S."/>
            <person name="Dong W."/>
            <person name="Yang J."/>
            <person name="Chen Y."/>
            <person name="Xue Y."/>
            <person name="Xu Y."/>
            <person name="Lai X."/>
            <person name="Huang L."/>
            <person name="Dong X."/>
            <person name="Ma Y."/>
            <person name="Ling L."/>
            <person name="Tan H."/>
            <person name="Chen R."/>
            <person name="Wang J."/>
            <person name="Yu J."/>
            <person name="Yang H."/>
        </authorList>
    </citation>
    <scope>NUCLEOTIDE SEQUENCE [LARGE SCALE GENOMIC DNA]</scope>
    <source>
        <strain>DSM 15242 / JCM 11007 / NBRC 100824 / MB4</strain>
    </source>
</reference>